<protein>
    <recommendedName>
        <fullName evidence="1">Protein FixA</fullName>
    </recommendedName>
</protein>
<comment type="function">
    <text evidence="1">Required for anaerobic carnitine reduction. May bring reductant to CaiA.</text>
</comment>
<comment type="pathway">
    <text evidence="1">Amine and polyamine metabolism; carnitine metabolism.</text>
</comment>
<comment type="subunit">
    <text evidence="1">Heterodimer of FixA and FixB.</text>
</comment>
<comment type="similarity">
    <text evidence="1">Belongs to the ETF beta-subunit/FixA family.</text>
</comment>
<comment type="sequence caution" evidence="2">
    <conflict type="erroneous initiation">
        <sequence resource="EMBL-CDS" id="AAN41704"/>
    </conflict>
    <text>Extended N-terminus.</text>
</comment>
<comment type="sequence caution" evidence="2">
    <conflict type="erroneous initiation">
        <sequence resource="EMBL-CDS" id="AAP15585"/>
    </conflict>
    <text>Extended N-terminus.</text>
</comment>
<accession>P59673</accession>
<dbReference type="EMBL" id="AE005674">
    <property type="protein sequence ID" value="AAN41704.2"/>
    <property type="status" value="ALT_INIT"/>
    <property type="molecule type" value="Genomic_DNA"/>
</dbReference>
<dbReference type="EMBL" id="AE014073">
    <property type="protein sequence ID" value="AAP15585.1"/>
    <property type="status" value="ALT_INIT"/>
    <property type="molecule type" value="Genomic_DNA"/>
</dbReference>
<dbReference type="RefSeq" id="NP_705997.4">
    <property type="nucleotide sequence ID" value="NC_004337.2"/>
</dbReference>
<dbReference type="RefSeq" id="WP_000692206.1">
    <property type="nucleotide sequence ID" value="NZ_WPGW01000005.1"/>
</dbReference>
<dbReference type="SMR" id="P59673"/>
<dbReference type="STRING" id="198214.SF0038"/>
<dbReference type="PaxDb" id="198214-SF0038"/>
<dbReference type="GeneID" id="1024559"/>
<dbReference type="KEGG" id="sfl:SF0038"/>
<dbReference type="KEGG" id="sfx:S0040"/>
<dbReference type="PATRIC" id="fig|198214.7.peg.45"/>
<dbReference type="HOGENOM" id="CLU_060196_2_2_6"/>
<dbReference type="UniPathway" id="UPA00117"/>
<dbReference type="Proteomes" id="UP000001006">
    <property type="component" value="Chromosome"/>
</dbReference>
<dbReference type="Proteomes" id="UP000002673">
    <property type="component" value="Chromosome"/>
</dbReference>
<dbReference type="GO" id="GO:0009055">
    <property type="term" value="F:electron transfer activity"/>
    <property type="evidence" value="ECO:0007669"/>
    <property type="project" value="InterPro"/>
</dbReference>
<dbReference type="GO" id="GO:0009437">
    <property type="term" value="P:carnitine metabolic process"/>
    <property type="evidence" value="ECO:0007669"/>
    <property type="project" value="UniProtKB-UniRule"/>
</dbReference>
<dbReference type="CDD" id="cd01714">
    <property type="entry name" value="ETF_beta"/>
    <property type="match status" value="1"/>
</dbReference>
<dbReference type="FunFam" id="3.40.50.620:FF:000072">
    <property type="entry name" value="Protein FixA homolog"/>
    <property type="match status" value="1"/>
</dbReference>
<dbReference type="Gene3D" id="3.40.50.620">
    <property type="entry name" value="HUPs"/>
    <property type="match status" value="1"/>
</dbReference>
<dbReference type="HAMAP" id="MF_01055">
    <property type="entry name" value="FixA"/>
    <property type="match status" value="1"/>
</dbReference>
<dbReference type="InterPro" id="IPR000049">
    <property type="entry name" value="ET-Flavoprotein_bsu_CS"/>
</dbReference>
<dbReference type="InterPro" id="IPR014730">
    <property type="entry name" value="ETF_a/b_N"/>
</dbReference>
<dbReference type="InterPro" id="IPR012255">
    <property type="entry name" value="ETF_b"/>
</dbReference>
<dbReference type="InterPro" id="IPR033948">
    <property type="entry name" value="ETF_beta_N"/>
</dbReference>
<dbReference type="InterPro" id="IPR023463">
    <property type="entry name" value="FixA"/>
</dbReference>
<dbReference type="InterPro" id="IPR014729">
    <property type="entry name" value="Rossmann-like_a/b/a_fold"/>
</dbReference>
<dbReference type="NCBIfam" id="NF002888">
    <property type="entry name" value="PRK03359.1"/>
    <property type="match status" value="1"/>
</dbReference>
<dbReference type="PANTHER" id="PTHR21294">
    <property type="entry name" value="ELECTRON TRANSFER FLAVOPROTEIN BETA-SUBUNIT"/>
    <property type="match status" value="1"/>
</dbReference>
<dbReference type="PANTHER" id="PTHR21294:SF17">
    <property type="entry name" value="PROTEIN FIXA"/>
    <property type="match status" value="1"/>
</dbReference>
<dbReference type="Pfam" id="PF01012">
    <property type="entry name" value="ETF"/>
    <property type="match status" value="1"/>
</dbReference>
<dbReference type="PIRSF" id="PIRSF000090">
    <property type="entry name" value="Beta-ETF"/>
    <property type="match status" value="1"/>
</dbReference>
<dbReference type="SMART" id="SM00893">
    <property type="entry name" value="ETF"/>
    <property type="match status" value="1"/>
</dbReference>
<dbReference type="SUPFAM" id="SSF52402">
    <property type="entry name" value="Adenine nucleotide alpha hydrolases-like"/>
    <property type="match status" value="1"/>
</dbReference>
<dbReference type="PROSITE" id="PS01065">
    <property type="entry name" value="ETF_BETA"/>
    <property type="match status" value="1"/>
</dbReference>
<name>FIXA_SHIFL</name>
<evidence type="ECO:0000255" key="1">
    <source>
        <dbReference type="HAMAP-Rule" id="MF_01055"/>
    </source>
</evidence>
<evidence type="ECO:0000305" key="2"/>
<keyword id="KW-0249">Electron transport</keyword>
<keyword id="KW-1185">Reference proteome</keyword>
<keyword id="KW-0813">Transport</keyword>
<organism>
    <name type="scientific">Shigella flexneri</name>
    <dbReference type="NCBI Taxonomy" id="623"/>
    <lineage>
        <taxon>Bacteria</taxon>
        <taxon>Pseudomonadati</taxon>
        <taxon>Pseudomonadota</taxon>
        <taxon>Gammaproteobacteria</taxon>
        <taxon>Enterobacterales</taxon>
        <taxon>Enterobacteriaceae</taxon>
        <taxon>Shigella</taxon>
    </lineage>
</organism>
<reference key="1">
    <citation type="journal article" date="2002" name="Nucleic Acids Res.">
        <title>Genome sequence of Shigella flexneri 2a: insights into pathogenicity through comparison with genomes of Escherichia coli K12 and O157.</title>
        <authorList>
            <person name="Jin Q."/>
            <person name="Yuan Z."/>
            <person name="Xu J."/>
            <person name="Wang Y."/>
            <person name="Shen Y."/>
            <person name="Lu W."/>
            <person name="Wang J."/>
            <person name="Liu H."/>
            <person name="Yang J."/>
            <person name="Yang F."/>
            <person name="Zhang X."/>
            <person name="Zhang J."/>
            <person name="Yang G."/>
            <person name="Wu H."/>
            <person name="Qu D."/>
            <person name="Dong J."/>
            <person name="Sun L."/>
            <person name="Xue Y."/>
            <person name="Zhao A."/>
            <person name="Gao Y."/>
            <person name="Zhu J."/>
            <person name="Kan B."/>
            <person name="Ding K."/>
            <person name="Chen S."/>
            <person name="Cheng H."/>
            <person name="Yao Z."/>
            <person name="He B."/>
            <person name="Chen R."/>
            <person name="Ma D."/>
            <person name="Qiang B."/>
            <person name="Wen Y."/>
            <person name="Hou Y."/>
            <person name="Yu J."/>
        </authorList>
    </citation>
    <scope>NUCLEOTIDE SEQUENCE [LARGE SCALE GENOMIC DNA]</scope>
    <source>
        <strain>301 / Serotype 2a</strain>
    </source>
</reference>
<reference key="2">
    <citation type="journal article" date="2003" name="Infect. Immun.">
        <title>Complete genome sequence and comparative genomics of Shigella flexneri serotype 2a strain 2457T.</title>
        <authorList>
            <person name="Wei J."/>
            <person name="Goldberg M.B."/>
            <person name="Burland V."/>
            <person name="Venkatesan M.M."/>
            <person name="Deng W."/>
            <person name="Fournier G."/>
            <person name="Mayhew G.F."/>
            <person name="Plunkett G. III"/>
            <person name="Rose D.J."/>
            <person name="Darling A."/>
            <person name="Mau B."/>
            <person name="Perna N.T."/>
            <person name="Payne S.M."/>
            <person name="Runyen-Janecky L.J."/>
            <person name="Zhou S."/>
            <person name="Schwartz D.C."/>
            <person name="Blattner F.R."/>
        </authorList>
    </citation>
    <scope>NUCLEOTIDE SEQUENCE [LARGE SCALE GENOMIC DNA]</scope>
    <source>
        <strain>ATCC 700930 / 2457T / Serotype 2a</strain>
    </source>
</reference>
<feature type="chain" id="PRO_0000167898" description="Protein FixA">
    <location>
        <begin position="1"/>
        <end position="256"/>
    </location>
</feature>
<sequence length="256" mass="27158">MKIITCYKCVPDEQDIAVNNADGSLDFSKADAKISQYDLNAIEAACQLKQQAAEAQVTALSVGGKALTNAKGRKDVLSRGPDELIVVIDDQFEQALPQQTASALAAAAQKAGFDLILCGDGSSDLYAQQVGLLVGEILNIPAVNGVSKIISLTADTLTVERELEDETETLSIPLPAVVAVSTDINSPQIPSMKAILGAAKKPVQVWSAADIGFNAVDAWSEQQVAAPKQRERQRIVIEGDGEEQIAAFAENLRKVI</sequence>
<gene>
    <name evidence="1" type="primary">fixA</name>
    <name type="ordered locus">SF0038</name>
    <name type="ordered locus">S0040</name>
</gene>
<proteinExistence type="inferred from homology"/>